<proteinExistence type="inferred from homology"/>
<comment type="function">
    <text evidence="1">Located on the platform of the 30S subunit, it bridges several disparate RNA helices of the 16S rRNA. Forms part of the Shine-Dalgarno cleft in the 70S ribosome.</text>
</comment>
<comment type="subunit">
    <text evidence="1">Part of the 30S ribosomal subunit. Interacts with proteins S7 and S18. Binds to IF-3.</text>
</comment>
<comment type="similarity">
    <text evidence="1">Belongs to the universal ribosomal protein uS11 family.</text>
</comment>
<accession>Q62GM9</accession>
<organism>
    <name type="scientific">Burkholderia mallei (strain ATCC 23344)</name>
    <dbReference type="NCBI Taxonomy" id="243160"/>
    <lineage>
        <taxon>Bacteria</taxon>
        <taxon>Pseudomonadati</taxon>
        <taxon>Pseudomonadota</taxon>
        <taxon>Betaproteobacteria</taxon>
        <taxon>Burkholderiales</taxon>
        <taxon>Burkholderiaceae</taxon>
        <taxon>Burkholderia</taxon>
        <taxon>pseudomallei group</taxon>
    </lineage>
</organism>
<gene>
    <name evidence="1" type="primary">rpsK</name>
    <name type="ordered locus">BMA2608</name>
</gene>
<dbReference type="EMBL" id="CP000010">
    <property type="protein sequence ID" value="AAU47846.1"/>
    <property type="molecule type" value="Genomic_DNA"/>
</dbReference>
<dbReference type="RefSeq" id="WP_004197937.1">
    <property type="nucleotide sequence ID" value="NC_006348.1"/>
</dbReference>
<dbReference type="RefSeq" id="YP_104142.1">
    <property type="nucleotide sequence ID" value="NC_006348.1"/>
</dbReference>
<dbReference type="SMR" id="Q62GM9"/>
<dbReference type="GeneID" id="98107136"/>
<dbReference type="KEGG" id="bma:BMA2608"/>
<dbReference type="PATRIC" id="fig|243160.12.peg.2679"/>
<dbReference type="eggNOG" id="COG0100">
    <property type="taxonomic scope" value="Bacteria"/>
</dbReference>
<dbReference type="HOGENOM" id="CLU_072439_5_0_4"/>
<dbReference type="PRO" id="PR:Q62GM9"/>
<dbReference type="Proteomes" id="UP000006693">
    <property type="component" value="Chromosome 1"/>
</dbReference>
<dbReference type="GO" id="GO:1990904">
    <property type="term" value="C:ribonucleoprotein complex"/>
    <property type="evidence" value="ECO:0007669"/>
    <property type="project" value="UniProtKB-KW"/>
</dbReference>
<dbReference type="GO" id="GO:0005840">
    <property type="term" value="C:ribosome"/>
    <property type="evidence" value="ECO:0007669"/>
    <property type="project" value="UniProtKB-KW"/>
</dbReference>
<dbReference type="GO" id="GO:0019843">
    <property type="term" value="F:rRNA binding"/>
    <property type="evidence" value="ECO:0007669"/>
    <property type="project" value="UniProtKB-UniRule"/>
</dbReference>
<dbReference type="GO" id="GO:0003735">
    <property type="term" value="F:structural constituent of ribosome"/>
    <property type="evidence" value="ECO:0007669"/>
    <property type="project" value="InterPro"/>
</dbReference>
<dbReference type="GO" id="GO:0006412">
    <property type="term" value="P:translation"/>
    <property type="evidence" value="ECO:0007669"/>
    <property type="project" value="UniProtKB-UniRule"/>
</dbReference>
<dbReference type="FunFam" id="3.30.420.80:FF:000001">
    <property type="entry name" value="30S ribosomal protein S11"/>
    <property type="match status" value="1"/>
</dbReference>
<dbReference type="Gene3D" id="3.30.420.80">
    <property type="entry name" value="Ribosomal protein S11"/>
    <property type="match status" value="1"/>
</dbReference>
<dbReference type="HAMAP" id="MF_01310">
    <property type="entry name" value="Ribosomal_uS11"/>
    <property type="match status" value="1"/>
</dbReference>
<dbReference type="InterPro" id="IPR001971">
    <property type="entry name" value="Ribosomal_uS11"/>
</dbReference>
<dbReference type="InterPro" id="IPR019981">
    <property type="entry name" value="Ribosomal_uS11_bac-type"/>
</dbReference>
<dbReference type="InterPro" id="IPR018102">
    <property type="entry name" value="Ribosomal_uS11_CS"/>
</dbReference>
<dbReference type="InterPro" id="IPR036967">
    <property type="entry name" value="Ribosomal_uS11_sf"/>
</dbReference>
<dbReference type="NCBIfam" id="NF003698">
    <property type="entry name" value="PRK05309.1"/>
    <property type="match status" value="1"/>
</dbReference>
<dbReference type="NCBIfam" id="TIGR03632">
    <property type="entry name" value="uS11_bact"/>
    <property type="match status" value="1"/>
</dbReference>
<dbReference type="PANTHER" id="PTHR11759">
    <property type="entry name" value="40S RIBOSOMAL PROTEIN S14/30S RIBOSOMAL PROTEIN S11"/>
    <property type="match status" value="1"/>
</dbReference>
<dbReference type="Pfam" id="PF00411">
    <property type="entry name" value="Ribosomal_S11"/>
    <property type="match status" value="1"/>
</dbReference>
<dbReference type="PIRSF" id="PIRSF002131">
    <property type="entry name" value="Ribosomal_S11"/>
    <property type="match status" value="1"/>
</dbReference>
<dbReference type="SUPFAM" id="SSF53137">
    <property type="entry name" value="Translational machinery components"/>
    <property type="match status" value="1"/>
</dbReference>
<dbReference type="PROSITE" id="PS00054">
    <property type="entry name" value="RIBOSOMAL_S11"/>
    <property type="match status" value="1"/>
</dbReference>
<reference key="1">
    <citation type="journal article" date="2004" name="Proc. Natl. Acad. Sci. U.S.A.">
        <title>Structural flexibility in the Burkholderia mallei genome.</title>
        <authorList>
            <person name="Nierman W.C."/>
            <person name="DeShazer D."/>
            <person name="Kim H.S."/>
            <person name="Tettelin H."/>
            <person name="Nelson K.E."/>
            <person name="Feldblyum T.V."/>
            <person name="Ulrich R.L."/>
            <person name="Ronning C.M."/>
            <person name="Brinkac L.M."/>
            <person name="Daugherty S.C."/>
            <person name="Davidsen T.D."/>
            <person name="DeBoy R.T."/>
            <person name="Dimitrov G."/>
            <person name="Dodson R.J."/>
            <person name="Durkin A.S."/>
            <person name="Gwinn M.L."/>
            <person name="Haft D.H."/>
            <person name="Khouri H.M."/>
            <person name="Kolonay J.F."/>
            <person name="Madupu R."/>
            <person name="Mohammoud Y."/>
            <person name="Nelson W.C."/>
            <person name="Radune D."/>
            <person name="Romero C.M."/>
            <person name="Sarria S."/>
            <person name="Selengut J."/>
            <person name="Shamblin C."/>
            <person name="Sullivan S.A."/>
            <person name="White O."/>
            <person name="Yu Y."/>
            <person name="Zafar N."/>
            <person name="Zhou L."/>
            <person name="Fraser C.M."/>
        </authorList>
    </citation>
    <scope>NUCLEOTIDE SEQUENCE [LARGE SCALE GENOMIC DNA]</scope>
    <source>
        <strain>ATCC 23344</strain>
    </source>
</reference>
<protein>
    <recommendedName>
        <fullName evidence="1">Small ribosomal subunit protein uS11</fullName>
    </recommendedName>
    <alternativeName>
        <fullName evidence="2">30S ribosomal protein S11</fullName>
    </alternativeName>
</protein>
<evidence type="ECO:0000255" key="1">
    <source>
        <dbReference type="HAMAP-Rule" id="MF_01310"/>
    </source>
</evidence>
<evidence type="ECO:0000305" key="2"/>
<name>RS11_BURMA</name>
<feature type="chain" id="PRO_0000123123" description="Small ribosomal subunit protein uS11">
    <location>
        <begin position="1"/>
        <end position="133"/>
    </location>
</feature>
<keyword id="KW-1185">Reference proteome</keyword>
<keyword id="KW-0687">Ribonucleoprotein</keyword>
<keyword id="KW-0689">Ribosomal protein</keyword>
<keyword id="KW-0694">RNA-binding</keyword>
<keyword id="KW-0699">rRNA-binding</keyword>
<sequence>MAKASNTAAQRVRKKVKKNVAEGVVHVHASFNNTIITITDRQGNALAWATSGGQGFKGSRKSTPFAAQVAAESAGRVAMEYGVKNLEVRIKGPGPGRESAVRALHGLGIKITAISDVTPIPHNGCRPPKRRRI</sequence>